<name>DDL_LIMRD</name>
<evidence type="ECO:0000250" key="1"/>
<evidence type="ECO:0000255" key="2">
    <source>
        <dbReference type="HAMAP-Rule" id="MF_00047"/>
    </source>
</evidence>
<accession>A5VIS1</accession>
<feature type="chain" id="PRO_0000341122" description="D-alanine--D-alanine ligase">
    <location>
        <begin position="1"/>
        <end position="378"/>
    </location>
</feature>
<feature type="domain" description="ATP-grasp" evidence="2">
    <location>
        <begin position="140"/>
        <end position="346"/>
    </location>
</feature>
<feature type="binding site" evidence="2">
    <location>
        <begin position="170"/>
        <end position="225"/>
    </location>
    <ligand>
        <name>ATP</name>
        <dbReference type="ChEBI" id="CHEBI:30616"/>
    </ligand>
</feature>
<feature type="binding site" evidence="2">
    <location>
        <position position="300"/>
    </location>
    <ligand>
        <name>Mg(2+)</name>
        <dbReference type="ChEBI" id="CHEBI:18420"/>
        <label>1</label>
    </ligand>
</feature>
<feature type="binding site" evidence="2">
    <location>
        <position position="313"/>
    </location>
    <ligand>
        <name>Mg(2+)</name>
        <dbReference type="ChEBI" id="CHEBI:18420"/>
        <label>1</label>
    </ligand>
</feature>
<feature type="binding site" evidence="2">
    <location>
        <position position="313"/>
    </location>
    <ligand>
        <name>Mg(2+)</name>
        <dbReference type="ChEBI" id="CHEBI:18420"/>
        <label>2</label>
    </ligand>
</feature>
<feature type="binding site" evidence="2">
    <location>
        <position position="315"/>
    </location>
    <ligand>
        <name>Mg(2+)</name>
        <dbReference type="ChEBI" id="CHEBI:18420"/>
        <label>2</label>
    </ligand>
</feature>
<comment type="function">
    <text evidence="2">Cell wall formation.</text>
</comment>
<comment type="catalytic activity">
    <reaction evidence="2">
        <text>2 D-alanine + ATP = D-alanyl-D-alanine + ADP + phosphate + H(+)</text>
        <dbReference type="Rhea" id="RHEA:11224"/>
        <dbReference type="ChEBI" id="CHEBI:15378"/>
        <dbReference type="ChEBI" id="CHEBI:30616"/>
        <dbReference type="ChEBI" id="CHEBI:43474"/>
        <dbReference type="ChEBI" id="CHEBI:57416"/>
        <dbReference type="ChEBI" id="CHEBI:57822"/>
        <dbReference type="ChEBI" id="CHEBI:456216"/>
        <dbReference type="EC" id="6.3.2.4"/>
    </reaction>
</comment>
<comment type="cofactor">
    <cofactor evidence="1">
        <name>Mg(2+)</name>
        <dbReference type="ChEBI" id="CHEBI:18420"/>
    </cofactor>
    <cofactor evidence="1">
        <name>Mn(2+)</name>
        <dbReference type="ChEBI" id="CHEBI:29035"/>
    </cofactor>
    <text evidence="1">Binds 2 magnesium or manganese ions per subunit.</text>
</comment>
<comment type="pathway">
    <text evidence="2">Cell wall biogenesis; peptidoglycan biosynthesis.</text>
</comment>
<comment type="subcellular location">
    <subcellularLocation>
        <location evidence="2">Cytoplasm</location>
    </subcellularLocation>
</comment>
<comment type="similarity">
    <text evidence="2">Belongs to the D-alanine--D-alanine ligase family.</text>
</comment>
<protein>
    <recommendedName>
        <fullName evidence="2">D-alanine--D-alanine ligase</fullName>
        <ecNumber evidence="2">6.3.2.4</ecNumber>
    </recommendedName>
    <alternativeName>
        <fullName evidence="2">D-Ala-D-Ala ligase</fullName>
    </alternativeName>
    <alternativeName>
        <fullName evidence="2">D-alanylalanine synthetase</fullName>
    </alternativeName>
</protein>
<proteinExistence type="inferred from homology"/>
<organism>
    <name type="scientific">Limosilactobacillus reuteri (strain DSM 20016)</name>
    <name type="common">Lactobacillus reuteri</name>
    <dbReference type="NCBI Taxonomy" id="557436"/>
    <lineage>
        <taxon>Bacteria</taxon>
        <taxon>Bacillati</taxon>
        <taxon>Bacillota</taxon>
        <taxon>Bacilli</taxon>
        <taxon>Lactobacillales</taxon>
        <taxon>Lactobacillaceae</taxon>
        <taxon>Limosilactobacillus</taxon>
    </lineage>
</organism>
<keyword id="KW-0067">ATP-binding</keyword>
<keyword id="KW-0133">Cell shape</keyword>
<keyword id="KW-0961">Cell wall biogenesis/degradation</keyword>
<keyword id="KW-0963">Cytoplasm</keyword>
<keyword id="KW-0436">Ligase</keyword>
<keyword id="KW-0460">Magnesium</keyword>
<keyword id="KW-0464">Manganese</keyword>
<keyword id="KW-0479">Metal-binding</keyword>
<keyword id="KW-0547">Nucleotide-binding</keyword>
<keyword id="KW-0573">Peptidoglycan synthesis</keyword>
<keyword id="KW-1185">Reference proteome</keyword>
<gene>
    <name evidence="2" type="primary">ddl</name>
    <name type="ordered locus">Lreu_0477</name>
</gene>
<reference key="1">
    <citation type="journal article" date="2011" name="PLoS Genet.">
        <title>The evolution of host specialization in the vertebrate gut symbiont Lactobacillus reuteri.</title>
        <authorList>
            <person name="Frese S.A."/>
            <person name="Benson A.K."/>
            <person name="Tannock G.W."/>
            <person name="Loach D.M."/>
            <person name="Kim J."/>
            <person name="Zhang M."/>
            <person name="Oh P.L."/>
            <person name="Heng N.C."/>
            <person name="Patil P.B."/>
            <person name="Juge N."/>
            <person name="Mackenzie D.A."/>
            <person name="Pearson B.M."/>
            <person name="Lapidus A."/>
            <person name="Dalin E."/>
            <person name="Tice H."/>
            <person name="Goltsman E."/>
            <person name="Land M."/>
            <person name="Hauser L."/>
            <person name="Ivanova N."/>
            <person name="Kyrpides N.C."/>
            <person name="Walter J."/>
        </authorList>
    </citation>
    <scope>NUCLEOTIDE SEQUENCE [LARGE SCALE GENOMIC DNA]</scope>
    <source>
        <strain>DSM 20016</strain>
    </source>
</reference>
<sequence>MTQKLHIALLFGGNSSEHDVSKRSAHNIYDALDKEKYDVSLFMFTKDGILLGNEDSQKIFDGEPEDQVVAEAYQKMDMSSPLAPIMALNEQKEIDFFFPVIHGNLGEDGTIQGLFKLLNKPYVGSNIAASAMSFDKDLTKKIISQAGIRNTPYVVVTPENQADYSWGRIEEKLGNLTFVKPAKQGSSVGIHRVTNAEEYEKALDDAFKYDYKILVEQGIANPQEIEISILGNEHPIASKLGAVRVPKDDPFYDYENKFVDASGVVFELPVKLPQYLVDEITDMALKAYKALGMKGMARIDFLVDSNNVPYLGEPNTLPGFTNISLYPQMWEVSGISYSDLIDRLIQLGLQEFERNSKIKYDFRKLGTERVGQKKYNED</sequence>
<dbReference type="EC" id="6.3.2.4" evidence="2"/>
<dbReference type="EMBL" id="CP000705">
    <property type="protein sequence ID" value="ABQ82745.1"/>
    <property type="molecule type" value="Genomic_DNA"/>
</dbReference>
<dbReference type="RefSeq" id="WP_003667568.1">
    <property type="nucleotide sequence ID" value="NC_009513.1"/>
</dbReference>
<dbReference type="SMR" id="A5VIS1"/>
<dbReference type="STRING" id="557436.Lreu_0477"/>
<dbReference type="KEGG" id="lre:Lreu_0477"/>
<dbReference type="eggNOG" id="COG1181">
    <property type="taxonomic scope" value="Bacteria"/>
</dbReference>
<dbReference type="HOGENOM" id="CLU_039268_0_1_9"/>
<dbReference type="UniPathway" id="UPA00219"/>
<dbReference type="Proteomes" id="UP000001991">
    <property type="component" value="Chromosome"/>
</dbReference>
<dbReference type="GO" id="GO:0005829">
    <property type="term" value="C:cytosol"/>
    <property type="evidence" value="ECO:0007669"/>
    <property type="project" value="TreeGrafter"/>
</dbReference>
<dbReference type="GO" id="GO:0005524">
    <property type="term" value="F:ATP binding"/>
    <property type="evidence" value="ECO:0007669"/>
    <property type="project" value="UniProtKB-KW"/>
</dbReference>
<dbReference type="GO" id="GO:0008716">
    <property type="term" value="F:D-alanine-D-alanine ligase activity"/>
    <property type="evidence" value="ECO:0007669"/>
    <property type="project" value="UniProtKB-UniRule"/>
</dbReference>
<dbReference type="GO" id="GO:0046872">
    <property type="term" value="F:metal ion binding"/>
    <property type="evidence" value="ECO:0007669"/>
    <property type="project" value="UniProtKB-KW"/>
</dbReference>
<dbReference type="GO" id="GO:0071555">
    <property type="term" value="P:cell wall organization"/>
    <property type="evidence" value="ECO:0007669"/>
    <property type="project" value="UniProtKB-KW"/>
</dbReference>
<dbReference type="GO" id="GO:0009252">
    <property type="term" value="P:peptidoglycan biosynthetic process"/>
    <property type="evidence" value="ECO:0007669"/>
    <property type="project" value="UniProtKB-UniRule"/>
</dbReference>
<dbReference type="GO" id="GO:0008360">
    <property type="term" value="P:regulation of cell shape"/>
    <property type="evidence" value="ECO:0007669"/>
    <property type="project" value="UniProtKB-KW"/>
</dbReference>
<dbReference type="FunFam" id="3.30.1490.20:FF:000007">
    <property type="entry name" value="D-alanine--D-alanine ligase"/>
    <property type="match status" value="1"/>
</dbReference>
<dbReference type="Gene3D" id="3.40.50.20">
    <property type="match status" value="1"/>
</dbReference>
<dbReference type="Gene3D" id="3.30.1490.20">
    <property type="entry name" value="ATP-grasp fold, A domain"/>
    <property type="match status" value="1"/>
</dbReference>
<dbReference type="Gene3D" id="3.30.470.20">
    <property type="entry name" value="ATP-grasp fold, B domain"/>
    <property type="match status" value="1"/>
</dbReference>
<dbReference type="HAMAP" id="MF_00047">
    <property type="entry name" value="Dala_Dala_lig"/>
    <property type="match status" value="1"/>
</dbReference>
<dbReference type="InterPro" id="IPR011761">
    <property type="entry name" value="ATP-grasp"/>
</dbReference>
<dbReference type="InterPro" id="IPR013815">
    <property type="entry name" value="ATP_grasp_subdomain_1"/>
</dbReference>
<dbReference type="InterPro" id="IPR000291">
    <property type="entry name" value="D-Ala_lig_Van_CS"/>
</dbReference>
<dbReference type="InterPro" id="IPR005905">
    <property type="entry name" value="D_ala_D_ala"/>
</dbReference>
<dbReference type="InterPro" id="IPR011095">
    <property type="entry name" value="Dala_Dala_lig_C"/>
</dbReference>
<dbReference type="InterPro" id="IPR011127">
    <property type="entry name" value="Dala_Dala_lig_N"/>
</dbReference>
<dbReference type="InterPro" id="IPR016185">
    <property type="entry name" value="PreATP-grasp_dom_sf"/>
</dbReference>
<dbReference type="NCBIfam" id="TIGR01205">
    <property type="entry name" value="D_ala_D_alaTIGR"/>
    <property type="match status" value="1"/>
</dbReference>
<dbReference type="NCBIfam" id="NF002528">
    <property type="entry name" value="PRK01966.1-4"/>
    <property type="match status" value="1"/>
</dbReference>
<dbReference type="PANTHER" id="PTHR23132">
    <property type="entry name" value="D-ALANINE--D-ALANINE LIGASE"/>
    <property type="match status" value="1"/>
</dbReference>
<dbReference type="PANTHER" id="PTHR23132:SF25">
    <property type="entry name" value="D-ALANINE--D-ALANINE LIGASE A"/>
    <property type="match status" value="1"/>
</dbReference>
<dbReference type="Pfam" id="PF07478">
    <property type="entry name" value="Dala_Dala_lig_C"/>
    <property type="match status" value="1"/>
</dbReference>
<dbReference type="Pfam" id="PF01820">
    <property type="entry name" value="Dala_Dala_lig_N"/>
    <property type="match status" value="1"/>
</dbReference>
<dbReference type="PIRSF" id="PIRSF039102">
    <property type="entry name" value="Ddl/VanB"/>
    <property type="match status" value="1"/>
</dbReference>
<dbReference type="SUPFAM" id="SSF56059">
    <property type="entry name" value="Glutathione synthetase ATP-binding domain-like"/>
    <property type="match status" value="1"/>
</dbReference>
<dbReference type="SUPFAM" id="SSF52440">
    <property type="entry name" value="PreATP-grasp domain"/>
    <property type="match status" value="1"/>
</dbReference>
<dbReference type="PROSITE" id="PS50975">
    <property type="entry name" value="ATP_GRASP"/>
    <property type="match status" value="1"/>
</dbReference>
<dbReference type="PROSITE" id="PS00843">
    <property type="entry name" value="DALA_DALA_LIGASE_1"/>
    <property type="match status" value="1"/>
</dbReference>
<dbReference type="PROSITE" id="PS00844">
    <property type="entry name" value="DALA_DALA_LIGASE_2"/>
    <property type="match status" value="1"/>
</dbReference>